<feature type="chain" id="PRO_0000259528" description="Histone-lysine N-methyltransferase SETMAR">
    <location>
        <begin position="1"/>
        <end position="315"/>
    </location>
</feature>
<feature type="domain" description="Pre-SET" evidence="3">
    <location>
        <begin position="74"/>
        <end position="137"/>
    </location>
</feature>
<feature type="domain" description="SET" evidence="4">
    <location>
        <begin position="140"/>
        <end position="264"/>
    </location>
</feature>
<feature type="domain" description="Post-SET" evidence="2">
    <location>
        <begin position="284"/>
        <end position="300"/>
    </location>
</feature>
<feature type="binding site" evidence="1">
    <location>
        <position position="76"/>
    </location>
    <ligand>
        <name>Zn(2+)</name>
        <dbReference type="ChEBI" id="CHEBI:29105"/>
        <label>1</label>
    </ligand>
</feature>
<feature type="binding site" evidence="1">
    <location>
        <position position="76"/>
    </location>
    <ligand>
        <name>Zn(2+)</name>
        <dbReference type="ChEBI" id="CHEBI:29105"/>
        <label>2</label>
    </ligand>
</feature>
<feature type="binding site" evidence="1">
    <location>
        <position position="78"/>
    </location>
    <ligand>
        <name>Zn(2+)</name>
        <dbReference type="ChEBI" id="CHEBI:29105"/>
        <label>1</label>
    </ligand>
</feature>
<feature type="binding site" evidence="1">
    <location>
        <position position="83"/>
    </location>
    <ligand>
        <name>Zn(2+)</name>
        <dbReference type="ChEBI" id="CHEBI:29105"/>
        <label>1</label>
    </ligand>
</feature>
<feature type="binding site" evidence="1">
    <location>
        <position position="83"/>
    </location>
    <ligand>
        <name>Zn(2+)</name>
        <dbReference type="ChEBI" id="CHEBI:29105"/>
        <label>3</label>
    </ligand>
</feature>
<feature type="binding site" evidence="1">
    <location>
        <position position="88"/>
    </location>
    <ligand>
        <name>Zn(2+)</name>
        <dbReference type="ChEBI" id="CHEBI:29105"/>
        <label>1</label>
    </ligand>
</feature>
<feature type="binding site" evidence="1">
    <location>
        <position position="90"/>
    </location>
    <ligand>
        <name>Zn(2+)</name>
        <dbReference type="ChEBI" id="CHEBI:29105"/>
        <label>2</label>
    </ligand>
</feature>
<feature type="binding site" evidence="1">
    <location>
        <position position="119"/>
    </location>
    <ligand>
        <name>Zn(2+)</name>
        <dbReference type="ChEBI" id="CHEBI:29105"/>
        <label>2</label>
    </ligand>
</feature>
<feature type="binding site" evidence="1">
    <location>
        <position position="119"/>
    </location>
    <ligand>
        <name>Zn(2+)</name>
        <dbReference type="ChEBI" id="CHEBI:29105"/>
        <label>3</label>
    </ligand>
</feature>
<feature type="binding site" evidence="1">
    <location>
        <position position="123"/>
    </location>
    <ligand>
        <name>Zn(2+)</name>
        <dbReference type="ChEBI" id="CHEBI:29105"/>
        <label>2</label>
    </ligand>
</feature>
<feature type="binding site" evidence="1">
    <location>
        <position position="125"/>
    </location>
    <ligand>
        <name>Zn(2+)</name>
        <dbReference type="ChEBI" id="CHEBI:29105"/>
        <label>3</label>
    </ligand>
</feature>
<feature type="binding site" evidence="1">
    <location>
        <position position="129"/>
    </location>
    <ligand>
        <name>Zn(2+)</name>
        <dbReference type="ChEBI" id="CHEBI:29105"/>
        <label>3</label>
    </ligand>
</feature>
<feature type="binding site" evidence="1">
    <location>
        <begin position="150"/>
        <end position="152"/>
    </location>
    <ligand>
        <name>S-adenosyl-L-methionine</name>
        <dbReference type="ChEBI" id="CHEBI:59789"/>
    </ligand>
</feature>
<feature type="binding site" evidence="4">
    <location>
        <position position="193"/>
    </location>
    <ligand>
        <name>S-adenosyl-L-methionine</name>
        <dbReference type="ChEBI" id="CHEBI:59789"/>
    </ligand>
</feature>
<feature type="binding site" evidence="4">
    <location>
        <position position="221"/>
    </location>
    <ligand>
        <name>S-adenosyl-L-methionine</name>
        <dbReference type="ChEBI" id="CHEBI:59789"/>
    </ligand>
</feature>
<feature type="binding site" evidence="1">
    <location>
        <begin position="224"/>
        <end position="225"/>
    </location>
    <ligand>
        <name>S-adenosyl-L-methionine</name>
        <dbReference type="ChEBI" id="CHEBI:59789"/>
    </ligand>
</feature>
<feature type="binding site" evidence="1">
    <location>
        <position position="227"/>
    </location>
    <ligand>
        <name>Zn(2+)</name>
        <dbReference type="ChEBI" id="CHEBI:29105"/>
        <label>4</label>
    </ligand>
</feature>
<feature type="binding site" evidence="1">
    <location>
        <position position="288"/>
    </location>
    <ligand>
        <name>Zn(2+)</name>
        <dbReference type="ChEBI" id="CHEBI:29105"/>
        <label>4</label>
    </ligand>
</feature>
<feature type="binding site" evidence="1">
    <location>
        <position position="290"/>
    </location>
    <ligand>
        <name>Zn(2+)</name>
        <dbReference type="ChEBI" id="CHEBI:29105"/>
        <label>4</label>
    </ligand>
</feature>
<feature type="binding site" evidence="1">
    <location>
        <position position="295"/>
    </location>
    <ligand>
        <name>Zn(2+)</name>
        <dbReference type="ChEBI" id="CHEBI:29105"/>
        <label>4</label>
    </ligand>
</feature>
<gene>
    <name evidence="6" type="primary">Setmar</name>
</gene>
<dbReference type="EC" id="2.1.1.357" evidence="1"/>
<dbReference type="EMBL" id="BC088181">
    <property type="protein sequence ID" value="AAH88181.1"/>
    <property type="molecule type" value="mRNA"/>
</dbReference>
<dbReference type="RefSeq" id="NP_001020219.1">
    <property type="nucleotide sequence ID" value="NM_001025048.1"/>
</dbReference>
<dbReference type="SMR" id="Q5I0M0"/>
<dbReference type="FunCoup" id="Q5I0M0">
    <property type="interactions" value="55"/>
</dbReference>
<dbReference type="STRING" id="10116.ENSRNOP00000008892"/>
<dbReference type="PhosphoSitePlus" id="Q5I0M0"/>
<dbReference type="PaxDb" id="10116-ENSRNOP00000008892"/>
<dbReference type="GeneID" id="500281"/>
<dbReference type="KEGG" id="rno:500281"/>
<dbReference type="UCSC" id="RGD:1565882">
    <property type="organism name" value="rat"/>
</dbReference>
<dbReference type="AGR" id="RGD:1565882"/>
<dbReference type="CTD" id="6419"/>
<dbReference type="RGD" id="1565882">
    <property type="gene designation" value="Setmar"/>
</dbReference>
<dbReference type="eggNOG" id="KOG1082">
    <property type="taxonomic scope" value="Eukaryota"/>
</dbReference>
<dbReference type="InParanoid" id="Q5I0M0"/>
<dbReference type="OrthoDB" id="3823at9989"/>
<dbReference type="PhylomeDB" id="Q5I0M0"/>
<dbReference type="PRO" id="PR:Q5I0M0"/>
<dbReference type="Proteomes" id="UP000002494">
    <property type="component" value="Unplaced"/>
</dbReference>
<dbReference type="GO" id="GO:0000793">
    <property type="term" value="C:condensed chromosome"/>
    <property type="evidence" value="ECO:0000266"/>
    <property type="project" value="RGD"/>
</dbReference>
<dbReference type="GO" id="GO:0005634">
    <property type="term" value="C:nucleus"/>
    <property type="evidence" value="ECO:0000266"/>
    <property type="project" value="RGD"/>
</dbReference>
<dbReference type="GO" id="GO:0035861">
    <property type="term" value="C:site of double-strand break"/>
    <property type="evidence" value="ECO:0000266"/>
    <property type="project" value="RGD"/>
</dbReference>
<dbReference type="GO" id="GO:0003677">
    <property type="term" value="F:DNA binding"/>
    <property type="evidence" value="ECO:0000266"/>
    <property type="project" value="RGD"/>
</dbReference>
<dbReference type="GO" id="GO:0044547">
    <property type="term" value="F:DNA topoisomerase binding"/>
    <property type="evidence" value="ECO:0000266"/>
    <property type="project" value="RGD"/>
</dbReference>
<dbReference type="GO" id="GO:0003690">
    <property type="term" value="F:double-stranded DNA binding"/>
    <property type="evidence" value="ECO:0000266"/>
    <property type="project" value="RGD"/>
</dbReference>
<dbReference type="GO" id="GO:0004519">
    <property type="term" value="F:endonuclease activity"/>
    <property type="evidence" value="ECO:0000266"/>
    <property type="project" value="RGD"/>
</dbReference>
<dbReference type="GO" id="GO:0140954">
    <property type="term" value="F:histone H3K36 dimethyltransferase activity"/>
    <property type="evidence" value="ECO:0000250"/>
    <property type="project" value="UniProtKB"/>
</dbReference>
<dbReference type="GO" id="GO:0046975">
    <property type="term" value="F:histone H3K36 methyltransferase activity"/>
    <property type="evidence" value="ECO:0000266"/>
    <property type="project" value="RGD"/>
</dbReference>
<dbReference type="GO" id="GO:0042800">
    <property type="term" value="F:histone H3K4 methyltransferase activity"/>
    <property type="evidence" value="ECO:0000250"/>
    <property type="project" value="UniProtKB"/>
</dbReference>
<dbReference type="GO" id="GO:0042054">
    <property type="term" value="F:histone methyltransferase activity"/>
    <property type="evidence" value="ECO:0000318"/>
    <property type="project" value="GO_Central"/>
</dbReference>
<dbReference type="GO" id="GO:0042803">
    <property type="term" value="F:protein homodimerization activity"/>
    <property type="evidence" value="ECO:0000266"/>
    <property type="project" value="RGD"/>
</dbReference>
<dbReference type="GO" id="GO:0003697">
    <property type="term" value="F:single-stranded DNA binding"/>
    <property type="evidence" value="ECO:0000266"/>
    <property type="project" value="RGD"/>
</dbReference>
<dbReference type="GO" id="GO:0000014">
    <property type="term" value="F:single-stranded DNA endodeoxyribonuclease activity"/>
    <property type="evidence" value="ECO:0000266"/>
    <property type="project" value="RGD"/>
</dbReference>
<dbReference type="GO" id="GO:0008270">
    <property type="term" value="F:zinc ion binding"/>
    <property type="evidence" value="ECO:0007669"/>
    <property type="project" value="InterPro"/>
</dbReference>
<dbReference type="GO" id="GO:0008283">
    <property type="term" value="P:cell population proliferation"/>
    <property type="evidence" value="ECO:0000266"/>
    <property type="project" value="RGD"/>
</dbReference>
<dbReference type="GO" id="GO:0006308">
    <property type="term" value="P:DNA catabolic process"/>
    <property type="evidence" value="ECO:0000266"/>
    <property type="project" value="RGD"/>
</dbReference>
<dbReference type="GO" id="GO:0000729">
    <property type="term" value="P:DNA double-strand break processing"/>
    <property type="evidence" value="ECO:0000266"/>
    <property type="project" value="RGD"/>
</dbReference>
<dbReference type="GO" id="GO:0015074">
    <property type="term" value="P:DNA integration"/>
    <property type="evidence" value="ECO:0000266"/>
    <property type="project" value="RGD"/>
</dbReference>
<dbReference type="GO" id="GO:0006303">
    <property type="term" value="P:double-strand break repair via nonhomologous end joining"/>
    <property type="evidence" value="ECO:0000266"/>
    <property type="project" value="RGD"/>
</dbReference>
<dbReference type="GO" id="GO:0032259">
    <property type="term" value="P:methylation"/>
    <property type="evidence" value="ECO:0007669"/>
    <property type="project" value="UniProtKB-KW"/>
</dbReference>
<dbReference type="GO" id="GO:0044774">
    <property type="term" value="P:mitotic DNA integrity checkpoint signaling"/>
    <property type="evidence" value="ECO:0000266"/>
    <property type="project" value="RGD"/>
</dbReference>
<dbReference type="GO" id="GO:2001251">
    <property type="term" value="P:negative regulation of chromosome organization"/>
    <property type="evidence" value="ECO:0000266"/>
    <property type="project" value="RGD"/>
</dbReference>
<dbReference type="GO" id="GO:0045892">
    <property type="term" value="P:negative regulation of DNA-templated transcription"/>
    <property type="evidence" value="ECO:0007669"/>
    <property type="project" value="UniProtKB-ARBA"/>
</dbReference>
<dbReference type="GO" id="GO:0045814">
    <property type="term" value="P:negative regulation of gene expression, epigenetic"/>
    <property type="evidence" value="ECO:0007669"/>
    <property type="project" value="UniProtKB-ARBA"/>
</dbReference>
<dbReference type="GO" id="GO:2001034">
    <property type="term" value="P:positive regulation of double-strand break repair via nonhomologous end joining"/>
    <property type="evidence" value="ECO:0000266"/>
    <property type="project" value="RGD"/>
</dbReference>
<dbReference type="GO" id="GO:0031297">
    <property type="term" value="P:replication fork processing"/>
    <property type="evidence" value="ECO:0000266"/>
    <property type="project" value="RGD"/>
</dbReference>
<dbReference type="CDD" id="cd10544">
    <property type="entry name" value="SET_SETMAR"/>
    <property type="match status" value="1"/>
</dbReference>
<dbReference type="FunFam" id="2.170.270.10:FF:000041">
    <property type="entry name" value="Histone-lysine N-methyltransferase SETMAR"/>
    <property type="match status" value="1"/>
</dbReference>
<dbReference type="Gene3D" id="2.170.270.10">
    <property type="entry name" value="SET domain"/>
    <property type="match status" value="1"/>
</dbReference>
<dbReference type="InterPro" id="IPR050973">
    <property type="entry name" value="H3K9_Histone-Lys_N-MTase"/>
</dbReference>
<dbReference type="InterPro" id="IPR003616">
    <property type="entry name" value="Post-SET_dom"/>
</dbReference>
<dbReference type="InterPro" id="IPR007728">
    <property type="entry name" value="Pre-SET_dom"/>
</dbReference>
<dbReference type="InterPro" id="IPR001214">
    <property type="entry name" value="SET_dom"/>
</dbReference>
<dbReference type="InterPro" id="IPR046341">
    <property type="entry name" value="SET_dom_sf"/>
</dbReference>
<dbReference type="PANTHER" id="PTHR46223:SF3">
    <property type="entry name" value="HISTONE-LYSINE N-METHYLTRANSFERASE SET-23"/>
    <property type="match status" value="1"/>
</dbReference>
<dbReference type="PANTHER" id="PTHR46223">
    <property type="entry name" value="HISTONE-LYSINE N-METHYLTRANSFERASE SUV39H"/>
    <property type="match status" value="1"/>
</dbReference>
<dbReference type="Pfam" id="PF05033">
    <property type="entry name" value="Pre-SET"/>
    <property type="match status" value="1"/>
</dbReference>
<dbReference type="Pfam" id="PF00856">
    <property type="entry name" value="SET"/>
    <property type="match status" value="1"/>
</dbReference>
<dbReference type="SMART" id="SM00468">
    <property type="entry name" value="PreSET"/>
    <property type="match status" value="1"/>
</dbReference>
<dbReference type="SMART" id="SM00317">
    <property type="entry name" value="SET"/>
    <property type="match status" value="1"/>
</dbReference>
<dbReference type="SUPFAM" id="SSF82199">
    <property type="entry name" value="SET domain"/>
    <property type="match status" value="1"/>
</dbReference>
<dbReference type="PROSITE" id="PS50868">
    <property type="entry name" value="POST_SET"/>
    <property type="match status" value="1"/>
</dbReference>
<dbReference type="PROSITE" id="PS50867">
    <property type="entry name" value="PRE_SET"/>
    <property type="match status" value="1"/>
</dbReference>
<dbReference type="PROSITE" id="PS50280">
    <property type="entry name" value="SET"/>
    <property type="match status" value="1"/>
</dbReference>
<organism>
    <name type="scientific">Rattus norvegicus</name>
    <name type="common">Rat</name>
    <dbReference type="NCBI Taxonomy" id="10116"/>
    <lineage>
        <taxon>Eukaryota</taxon>
        <taxon>Metazoa</taxon>
        <taxon>Chordata</taxon>
        <taxon>Craniata</taxon>
        <taxon>Vertebrata</taxon>
        <taxon>Euteleostomi</taxon>
        <taxon>Mammalia</taxon>
        <taxon>Eutheria</taxon>
        <taxon>Euarchontoglires</taxon>
        <taxon>Glires</taxon>
        <taxon>Rodentia</taxon>
        <taxon>Myomorpha</taxon>
        <taxon>Muroidea</taxon>
        <taxon>Muridae</taxon>
        <taxon>Murinae</taxon>
        <taxon>Rattus</taxon>
    </lineage>
</organism>
<name>SETMR_RAT</name>
<reference key="1">
    <citation type="journal article" date="2004" name="Genome Res.">
        <title>The status, quality, and expansion of the NIH full-length cDNA project: the Mammalian Gene Collection (MGC).</title>
        <authorList>
            <consortium name="The MGC Project Team"/>
        </authorList>
    </citation>
    <scope>NUCLEOTIDE SEQUENCE [LARGE SCALE MRNA]</scope>
    <source>
        <tissue>Spleen</tissue>
    </source>
</reference>
<protein>
    <recommendedName>
        <fullName evidence="5">Histone-lysine N-methyltransferase SETMAR</fullName>
        <ecNumber evidence="1">2.1.1.357</ecNumber>
    </recommendedName>
    <alternativeName>
        <fullName>SET domain and mariner transposase fusion protein homolog</fullName>
    </alternativeName>
</protein>
<comment type="function">
    <text evidence="1">Histone methyltransferase that methylates 'Lys-4' and 'Lys-36' of histone H3, 2 specific tags for epigenetic transcriptional activation. Specifically mediates dimethylation of H3 'Lys-36'.</text>
</comment>
<comment type="catalytic activity">
    <reaction evidence="1">
        <text>L-lysyl(36)-[histone H3] + 2 S-adenosyl-L-methionine = N(6),N(6)-dimethyl-L-lysyl(36)-[histone H3] + 2 S-adenosyl-L-homocysteine + 2 H(+)</text>
        <dbReference type="Rhea" id="RHEA:60308"/>
        <dbReference type="Rhea" id="RHEA-COMP:9785"/>
        <dbReference type="Rhea" id="RHEA-COMP:9787"/>
        <dbReference type="ChEBI" id="CHEBI:15378"/>
        <dbReference type="ChEBI" id="CHEBI:29969"/>
        <dbReference type="ChEBI" id="CHEBI:57856"/>
        <dbReference type="ChEBI" id="CHEBI:59789"/>
        <dbReference type="ChEBI" id="CHEBI:61976"/>
        <dbReference type="EC" id="2.1.1.357"/>
    </reaction>
</comment>
<comment type="subcellular location">
    <subcellularLocation>
        <location evidence="1">Nucleus</location>
    </subcellularLocation>
    <subcellularLocation>
        <location evidence="1">Chromosome</location>
    </subcellularLocation>
</comment>
<comment type="domain">
    <text evidence="1">In the pre-SET domain, Cys residues bind 3 zinc ions that are arranged in a triangular cluster; some of these Cys residues contribute to the binding of two zinc ions within the cluster.</text>
</comment>
<comment type="similarity">
    <text evidence="4">Belongs to the class V-like SAM-binding methyltransferase superfamily.</text>
</comment>
<sequence>MSAEAVKKLSFEIAPSEEESEATIEQQDVACGLENLPVSLWPLGAGPRPKPFQYTPDHVAGPGVDMDPTQITFPGCACIKTPCVPGTCSCLRHESNYNDNLCLRDVGSEAKYAKPVFECNVLCQCGEHCRNRVVQSGLQFLLQVFQTEKKGWGLRTLEYIPKGRFVCEYAGEVLGFSEVQRRIHLQTAHDPNYIIALREHTYNGQVMETFVDPTYIGNIGRFLNHSCEPNLLMIPVRIDSMVPKLALFAAKDILPGEELSYDYSGRFLNQISSKDKERIDCGQPRKPCYCGAQSCATFLPYDSSLYGPLENPGTS</sequence>
<accession>Q5I0M0</accession>
<evidence type="ECO:0000250" key="1">
    <source>
        <dbReference type="UniProtKB" id="Q53H47"/>
    </source>
</evidence>
<evidence type="ECO:0000255" key="2">
    <source>
        <dbReference type="PROSITE-ProRule" id="PRU00155"/>
    </source>
</evidence>
<evidence type="ECO:0000255" key="3">
    <source>
        <dbReference type="PROSITE-ProRule" id="PRU00157"/>
    </source>
</evidence>
<evidence type="ECO:0000255" key="4">
    <source>
        <dbReference type="PROSITE-ProRule" id="PRU00190"/>
    </source>
</evidence>
<evidence type="ECO:0000305" key="5"/>
<evidence type="ECO:0000312" key="6">
    <source>
        <dbReference type="RGD" id="1565882"/>
    </source>
</evidence>
<proteinExistence type="evidence at transcript level"/>
<keyword id="KW-0156">Chromatin regulator</keyword>
<keyword id="KW-0158">Chromosome</keyword>
<keyword id="KW-0479">Metal-binding</keyword>
<keyword id="KW-0489">Methyltransferase</keyword>
<keyword id="KW-0539">Nucleus</keyword>
<keyword id="KW-1185">Reference proteome</keyword>
<keyword id="KW-0949">S-adenosyl-L-methionine</keyword>
<keyword id="KW-0808">Transferase</keyword>
<keyword id="KW-0862">Zinc</keyword>